<gene>
    <name evidence="17" type="ordered locus">DVU_0624</name>
</gene>
<feature type="initiator methionine" description="Removed" evidence="16">
    <location>
        <position position="1"/>
    </location>
</feature>
<feature type="chain" id="PRO_0000444028" description="Cytochrome c nitrite reductase subunit NrfH" evidence="16">
    <location>
        <begin position="2"/>
        <end position="159"/>
    </location>
</feature>
<feature type="topological domain" description="Cytoplasmic" evidence="5 6">
    <location>
        <begin position="2"/>
        <end position="14"/>
    </location>
</feature>
<feature type="transmembrane region" description="Helical; Signal-anchor for type II membrane protein" evidence="1 5 6">
    <location>
        <begin position="15"/>
        <end position="33"/>
    </location>
</feature>
<feature type="topological domain" description="Periplasmic" evidence="5 6">
    <location>
        <begin position="34"/>
        <end position="159"/>
    </location>
</feature>
<feature type="region of interest" description="Interaction with NrfA" evidence="5 19">
    <location>
        <begin position="99"/>
        <end position="100"/>
    </location>
</feature>
<feature type="region of interest" description="Interaction with NrfA" evidence="5 19">
    <location>
        <begin position="123"/>
        <end position="158"/>
    </location>
</feature>
<feature type="binding site" description="covalent" evidence="5 6 19 20">
    <location>
        <position position="43"/>
    </location>
    <ligand>
        <name>heme</name>
        <dbReference type="ChEBI" id="CHEBI:30413"/>
        <label>1</label>
    </ligand>
</feature>
<feature type="binding site" description="covalent" evidence="5 19">
    <location>
        <position position="46"/>
    </location>
    <ligand>
        <name>heme</name>
        <dbReference type="ChEBI" id="CHEBI:30413"/>
        <label>1</label>
    </ligand>
</feature>
<feature type="binding site" description="axial binding residue" evidence="5 19">
    <location>
        <position position="49"/>
    </location>
    <ligand>
        <name>heme</name>
        <dbReference type="ChEBI" id="CHEBI:30413"/>
        <label>1</label>
    </ligand>
    <ligandPart>
        <name>Fe</name>
        <dbReference type="ChEBI" id="CHEBI:18248"/>
    </ligandPart>
</feature>
<feature type="binding site" description="axial binding residue" evidence="5 6 19 20">
    <location>
        <position position="61"/>
    </location>
    <ligand>
        <name>heme</name>
        <dbReference type="ChEBI" id="CHEBI:30413"/>
        <label>3</label>
    </ligand>
    <ligandPart>
        <name>Fe</name>
        <dbReference type="ChEBI" id="CHEBI:18248"/>
    </ligandPart>
</feature>
<feature type="binding site" description="covalent" evidence="5 6 19 20">
    <location>
        <position position="66"/>
    </location>
    <ligand>
        <name>heme</name>
        <dbReference type="ChEBI" id="CHEBI:30413"/>
        <label>2</label>
    </ligand>
</feature>
<feature type="binding site" evidence="6 20">
    <location>
        <position position="67"/>
    </location>
    <ligand>
        <name>a menaquinol</name>
        <dbReference type="ChEBI" id="CHEBI:18151"/>
    </ligand>
</feature>
<feature type="binding site" description="covalent" evidence="5 6 19 20">
    <location>
        <position position="69"/>
    </location>
    <ligand>
        <name>heme</name>
        <dbReference type="ChEBI" id="CHEBI:30413"/>
        <label>2</label>
    </ligand>
</feature>
<feature type="binding site" description="axial binding residue" evidence="5 6 19 20">
    <location>
        <position position="70"/>
    </location>
    <ligand>
        <name>heme</name>
        <dbReference type="ChEBI" id="CHEBI:30413"/>
        <label>2</label>
    </ligand>
    <ligandPart>
        <name>Fe</name>
        <dbReference type="ChEBI" id="CHEBI:18248"/>
    </ligandPart>
</feature>
<feature type="binding site" evidence="6 20">
    <location>
        <position position="82"/>
    </location>
    <ligand>
        <name>a menaquinol</name>
        <dbReference type="ChEBI" id="CHEBI:18151"/>
    </ligand>
</feature>
<feature type="binding site" evidence="6 20">
    <location>
        <position position="89"/>
    </location>
    <ligand>
        <name>a menaquinol</name>
        <dbReference type="ChEBI" id="CHEBI:18151"/>
    </ligand>
</feature>
<feature type="binding site" description="axial binding residue" evidence="5 19">
    <location>
        <position position="89"/>
    </location>
    <ligand>
        <name>heme</name>
        <dbReference type="ChEBI" id="CHEBI:30413"/>
        <label>1</label>
    </ligand>
    <ligandPart>
        <name>Fe</name>
        <dbReference type="ChEBI" id="CHEBI:18248"/>
    </ligandPart>
</feature>
<feature type="binding site" description="covalent" evidence="5 19">
    <location>
        <position position="116"/>
    </location>
    <ligand>
        <name>heme</name>
        <dbReference type="ChEBI" id="CHEBI:30413"/>
        <label>3</label>
    </ligand>
</feature>
<feature type="binding site" description="covalent" evidence="5 19">
    <location>
        <position position="119"/>
    </location>
    <ligand>
        <name>heme</name>
        <dbReference type="ChEBI" id="CHEBI:30413"/>
        <label>3</label>
    </ligand>
</feature>
<feature type="binding site" description="axial binding residue" evidence="5 6 19 20">
    <location>
        <position position="120"/>
    </location>
    <ligand>
        <name>heme</name>
        <dbReference type="ChEBI" id="CHEBI:30413"/>
        <label>3</label>
    </ligand>
    <ligandPart>
        <name>Fe</name>
        <dbReference type="ChEBI" id="CHEBI:18248"/>
    </ligandPart>
</feature>
<feature type="binding site" description="covalent" evidence="5 6 19 20">
    <location>
        <position position="136"/>
    </location>
    <ligand>
        <name>heme</name>
        <dbReference type="ChEBI" id="CHEBI:30413"/>
        <label>4</label>
    </ligand>
</feature>
<feature type="binding site" description="covalent" evidence="5 19">
    <location>
        <position position="139"/>
    </location>
    <ligand>
        <name>heme</name>
        <dbReference type="ChEBI" id="CHEBI:30413"/>
        <label>4</label>
    </ligand>
</feature>
<feature type="binding site" description="axial binding residue" evidence="5 6 19 20">
    <location>
        <position position="140"/>
    </location>
    <ligand>
        <name>heme</name>
        <dbReference type="ChEBI" id="CHEBI:30413"/>
        <label>4</label>
    </ligand>
    <ligandPart>
        <name>Fe</name>
        <dbReference type="ChEBI" id="CHEBI:18248"/>
    </ligandPart>
</feature>
<feature type="binding site" description="axial binding residue" evidence="5 6 19 20">
    <location>
        <position position="145"/>
    </location>
    <ligand>
        <name>heme</name>
        <dbReference type="ChEBI" id="CHEBI:30413"/>
        <label>2</label>
    </ligand>
    <ligandPart>
        <name>Fe</name>
        <dbReference type="ChEBI" id="CHEBI:18248"/>
    </ligandPart>
</feature>
<feature type="site" description="Interaction with NrfA" evidence="5 19">
    <location>
        <position position="40"/>
    </location>
</feature>
<feature type="site" description="Interaction with NrfA" evidence="5 19">
    <location>
        <position position="57"/>
    </location>
</feature>
<feature type="site" description="Interaction with NrfA" evidence="5 19">
    <location>
        <position position="63"/>
    </location>
</feature>
<feature type="turn" evidence="21">
    <location>
        <begin position="17"/>
        <end position="19"/>
    </location>
</feature>
<feature type="helix" evidence="21">
    <location>
        <begin position="20"/>
        <end position="36"/>
    </location>
</feature>
<feature type="helix" evidence="21">
    <location>
        <begin position="40"/>
        <end position="43"/>
    </location>
</feature>
<feature type="helix" evidence="21">
    <location>
        <begin position="47"/>
        <end position="49"/>
    </location>
</feature>
<feature type="helix" evidence="21">
    <location>
        <begin position="50"/>
        <end position="58"/>
    </location>
</feature>
<feature type="turn" evidence="21">
    <location>
        <begin position="60"/>
        <end position="63"/>
    </location>
</feature>
<feature type="helix" evidence="21">
    <location>
        <begin position="67"/>
        <end position="70"/>
    </location>
</feature>
<feature type="helix" evidence="21">
    <location>
        <begin position="75"/>
        <end position="94"/>
    </location>
</feature>
<feature type="helix" evidence="21">
    <location>
        <begin position="106"/>
        <end position="124"/>
    </location>
</feature>
<feature type="turn" evidence="21">
    <location>
        <begin position="129"/>
        <end position="131"/>
    </location>
</feature>
<feature type="strand" evidence="21">
    <location>
        <begin position="132"/>
        <end position="135"/>
    </location>
</feature>
<feature type="helix" evidence="21">
    <location>
        <begin position="136"/>
        <end position="138"/>
    </location>
</feature>
<feature type="helix" evidence="21">
    <location>
        <begin position="141"/>
        <end position="143"/>
    </location>
</feature>
<feature type="turn" evidence="21">
    <location>
        <begin position="144"/>
        <end position="148"/>
    </location>
</feature>
<feature type="helix" evidence="21">
    <location>
        <begin position="151"/>
        <end position="153"/>
    </location>
</feature>
<accession>Q72EF4</accession>
<proteinExistence type="evidence at protein level"/>
<evidence type="ECO:0000255" key="1"/>
<evidence type="ECO:0000269" key="2">
    <source>
    </source>
</evidence>
<evidence type="ECO:0000269" key="3">
    <source>
    </source>
</evidence>
<evidence type="ECO:0000269" key="4">
    <source>
    </source>
</evidence>
<evidence type="ECO:0000269" key="5">
    <source>
    </source>
</evidence>
<evidence type="ECO:0000269" key="6">
    <source>
    </source>
</evidence>
<evidence type="ECO:0000269" key="7">
    <source>
    </source>
</evidence>
<evidence type="ECO:0000269" key="8">
    <source>
    </source>
</evidence>
<evidence type="ECO:0000269" key="9">
    <source>
    </source>
</evidence>
<evidence type="ECO:0000303" key="10">
    <source>
    </source>
</evidence>
<evidence type="ECO:0000303" key="11">
    <source>
    </source>
</evidence>
<evidence type="ECO:0000303" key="12">
    <source>
    </source>
</evidence>
<evidence type="ECO:0000303" key="13">
    <source>
    </source>
</evidence>
<evidence type="ECO:0000303" key="14">
    <source>
    </source>
</evidence>
<evidence type="ECO:0000305" key="15"/>
<evidence type="ECO:0000305" key="16">
    <source>
    </source>
</evidence>
<evidence type="ECO:0000312" key="17">
    <source>
        <dbReference type="EMBL" id="AAS95105.1"/>
    </source>
</evidence>
<evidence type="ECO:0000312" key="18">
    <source>
        <dbReference type="Proteomes" id="UP000002194"/>
    </source>
</evidence>
<evidence type="ECO:0007744" key="19">
    <source>
        <dbReference type="PDB" id="2J7A"/>
    </source>
</evidence>
<evidence type="ECO:0007744" key="20">
    <source>
        <dbReference type="PDB" id="2VR0"/>
    </source>
</evidence>
<evidence type="ECO:0007829" key="21">
    <source>
        <dbReference type="PDB" id="2J7A"/>
    </source>
</evidence>
<organism evidence="17">
    <name type="scientific">Nitratidesulfovibrio vulgaris (strain ATCC 29579 / DSM 644 / CCUG 34227 / NCIMB 8303 / VKM B-1760 / Hildenborough)</name>
    <name type="common">Desulfovibrio vulgaris</name>
    <dbReference type="NCBI Taxonomy" id="882"/>
    <lineage>
        <taxon>Bacteria</taxon>
        <taxon>Pseudomonadati</taxon>
        <taxon>Thermodesulfobacteriota</taxon>
        <taxon>Desulfovibrionia</taxon>
        <taxon>Desulfovibrionales</taxon>
        <taxon>Desulfovibrionaceae</taxon>
        <taxon>Nitratidesulfovibrio</taxon>
    </lineage>
</organism>
<sequence length="159" mass="17263">MSEEKSRNGPARLKLVLGGATLGVVALATVAFGMKYTDQRPFCTSCHIMNPVGVTHKLSGHANISCNDCHAPHNLLAKLPFKAIAGARDVYMNTLGHPGDLILAGMETKEVVNANCKACHTMTNVEVASMEAKKYCTDCHRNVQHMRMKPISTREVADE</sequence>
<comment type="function">
    <text evidence="2 3 5 6 8 15">Electron donor subunit of the cytochrome c nitrite reductase holocomplex NrfHA. Acquires electrons from the menaquinone pool and mediates their transfer to the catalytic subunit NrfA in an anaerobic respiratory process of nitrite (PubMed:11004582, PubMed:17139260, PubMed:18597779). The other biological function of the NrfHA holocomplex is to detoxify nitrite (PubMed:15547266, PubMed:25534748). This function is essential for the survival of this organism as it enables it to overcome inhibition by nitrite, which is produced by other organisms living in the same environment (Probable).</text>
</comment>
<comment type="cofactor">
    <cofactor evidence="5 6 7">
        <name>heme</name>
        <dbReference type="ChEBI" id="CHEBI:30413"/>
    </cofactor>
    <text evidence="5">Binds 4 heme groups per subunit.</text>
</comment>
<comment type="biophysicochemical properties">
    <redoxPotential>
        <text evidence="7">E(0) is -270 mV for the menaquinol-interacting methionine-coordinated heme 1, identified by the use of the inhibitor 2-heptyl-4-hydroxyquinoline N-oxide (HQNO), a structural analog of the physiological electron donor.</text>
    </redoxPotential>
</comment>
<comment type="subunit">
    <text evidence="4 5 6 7">Component of the NrfHA cytochrome c nitrite reductase complex composed of 4 NrfA catalytic subunits and 2 NrfH quinone-binding subunits (PubMed:17139260, PubMed:18597779, PubMed:22519292). Interacts with NrfA homodimer (PubMed:16754983, PubMed:17139260).</text>
</comment>
<comment type="subcellular location">
    <subcellularLocation>
        <location evidence="2 4 5 6 7">Cell inner membrane</location>
        <topology evidence="4 5 6">Single-pass type II membrane protein</topology>
    </subcellularLocation>
</comment>
<comment type="induction">
    <text evidence="9">Expression is induced by NrfR in response to nitrite stress. Not induced by nitrate or nitric oxide (NO) stress.</text>
</comment>
<comment type="similarity">
    <text evidence="15">Belongs to the NapC/NirT/NrfH family.</text>
</comment>
<reference evidence="17 18" key="1">
    <citation type="journal article" date="2004" name="Nat. Biotechnol.">
        <title>The genome sequence of the anaerobic, sulfate-reducing bacterium Desulfovibrio vulgaris Hildenborough.</title>
        <authorList>
            <person name="Heidelberg J.F."/>
            <person name="Seshadri R."/>
            <person name="Haveman S.A."/>
            <person name="Hemme C.L."/>
            <person name="Paulsen I.T."/>
            <person name="Kolonay J.F."/>
            <person name="Eisen J.A."/>
            <person name="Ward N.L."/>
            <person name="Methe B.A."/>
            <person name="Brinkac L.M."/>
            <person name="Daugherty S.C."/>
            <person name="DeBoy R.T."/>
            <person name="Dodson R.J."/>
            <person name="Durkin A.S."/>
            <person name="Madupu R."/>
            <person name="Nelson W.C."/>
            <person name="Sullivan S.A."/>
            <person name="Fouts D.E."/>
            <person name="Haft D.H."/>
            <person name="Selengut J."/>
            <person name="Peterson J.D."/>
            <person name="Davidsen T.M."/>
            <person name="Zafar N."/>
            <person name="Zhou L."/>
            <person name="Radune D."/>
            <person name="Dimitrov G."/>
            <person name="Hance M."/>
            <person name="Tran K."/>
            <person name="Khouri H.M."/>
            <person name="Gill J."/>
            <person name="Utterback T.R."/>
            <person name="Feldblyum T.V."/>
            <person name="Wall J.D."/>
            <person name="Voordouw G."/>
            <person name="Fraser C.M."/>
        </authorList>
    </citation>
    <scope>NUCLEOTIDE SEQUENCE [LARGE SCALE GENOMIC DNA]</scope>
    <source>
        <strain evidence="18">ATCC 29579 / DSM 644 / CCUG 34227 / NCIMB 8303 / VKM B-1760 / Hildenborough</strain>
    </source>
</reference>
<reference key="2">
    <citation type="journal article" date="2000" name="Biochim. Biophys. Acta">
        <title>Characterization of a heme c nitrite reductase from a non-ammonifying microorganism, Desulfovibrio vulgaris Hildenborough.</title>
        <authorList>
            <person name="Pereira I.A."/>
            <person name="LeGall J."/>
            <person name="Xavier A.V."/>
            <person name="Teixeira M."/>
        </authorList>
    </citation>
    <scope>PROTEIN SEQUENCE OF 2-26</scope>
    <scope>FUNCTION</scope>
    <scope>SUBCELLULAR LOCATION</scope>
    <source>
        <strain evidence="10">ATCC 29579 / DSM 644 / CCUG 34227 / NCIMB 8303 / VKM B-1760 / Hildenborough</strain>
    </source>
</reference>
<reference key="3">
    <citation type="journal article" date="2004" name="J. Bacteriol.">
        <title>Physiological and gene expression analysis of inhibition of Desulfovibrio vulgaris hildenborough by nitrite.</title>
        <authorList>
            <person name="Haveman S.A."/>
            <person name="Greene E.A."/>
            <person name="Stilwell C.P."/>
            <person name="Voordouw J.K."/>
            <person name="Voordouw G."/>
        </authorList>
    </citation>
    <scope>FUNCTION</scope>
</reference>
<reference key="4">
    <citation type="journal article" date="2006" name="Acta Crystallogr. F">
        <title>Crystallization and preliminary structure determination of the membrane-bound complex cytochrome c nitrite reductase from Desulfovibrio vulgaris Hildenborough.</title>
        <authorList>
            <person name="Rodrigues M.L."/>
            <person name="Oliveira T."/>
            <person name="Matias P.M."/>
            <person name="Martins I.C."/>
            <person name="Valente F.M."/>
            <person name="Pereira I.A."/>
            <person name="Archer M."/>
        </authorList>
    </citation>
    <scope>CRYSTALLIZATION</scope>
    <scope>SUBUNIT</scope>
    <scope>SUBCELLULAR LOCATION</scope>
    <source>
        <strain evidence="11">ATCC 29579 / DSM 644 / CCUG 34227 / NCIMB 8303 / VKM B-1760 / Hildenborough</strain>
    </source>
</reference>
<reference key="5">
    <citation type="journal article" date="2012" name="J. Phys. Chem. B">
        <title>Redox properties of lysine- and methionine-coordinated hemes ensure downhill electron transfer in NrfH2A4 nitrite reductase.</title>
        <authorList>
            <person name="Todorovic S."/>
            <person name="Rodrigues M.L."/>
            <person name="Matos D."/>
            <person name="Pereira I.A."/>
        </authorList>
    </citation>
    <scope>COFACTOR</scope>
    <scope>BIOPHYSICOCHEMICAL PROPERTIES</scope>
    <scope>EPR SPECTROSCOPY OF THE NRFHA COMPLEX</scope>
    <scope>SUBUNIT</scope>
    <scope>SUBCELLULAR LOCATION</scope>
</reference>
<reference key="6">
    <citation type="journal article" date="2015" name="Environ. Sci. Technol.">
        <title>Independence of nitrate and nitrite inhibition of Desulfovibrio vulgaris Hildenborough and use of nitrite as a substrate for growth.</title>
        <authorList>
            <person name="Korte H.L."/>
            <person name="Saini A."/>
            <person name="Trotter V.V."/>
            <person name="Butland G.P."/>
            <person name="Arkin A.P."/>
            <person name="Wall J.D."/>
        </authorList>
    </citation>
    <scope>FUNCTION</scope>
</reference>
<reference key="7">
    <citation type="journal article" date="2015" name="J. Bacteriol.">
        <title>Regulation of Nitrite Stress Response in Desulfovibrio vulgaris Hildenborough, a Model Sulfate-Reducing Bacterium.</title>
        <authorList>
            <person name="Rajeev L."/>
            <person name="Chen A."/>
            <person name="Kazakov A.E."/>
            <person name="Luning E.G."/>
            <person name="Zane G.M."/>
            <person name="Novichkov P.S."/>
            <person name="Wall J.D."/>
            <person name="Mukhopadhyay A."/>
        </authorList>
    </citation>
    <scope>INDUCTION</scope>
    <source>
        <strain evidence="14">ATCC 29579 / DSM 644 / CCUG 34227 / NCIMB 8303 / VKM B-1760 / Hildenborough</strain>
    </source>
</reference>
<reference evidence="19" key="8">
    <citation type="journal article" date="2006" name="EMBO J.">
        <title>X-ray structure of the membrane-bound cytochrome c quinol dehydrogenase NrfH reveals novel haem coordination.</title>
        <authorList>
            <person name="Rodrigues M.L."/>
            <person name="Oliveira T.F."/>
            <person name="Pereira I.A."/>
            <person name="Archer M."/>
        </authorList>
    </citation>
    <scope>X-RAY CRYSTALLOGRAPHY (2.30 ANGSTROMS) IN COMPLEX WITH HEME AND NRFA</scope>
    <scope>FUNCTION</scope>
    <scope>COFACTOR</scope>
    <scope>SUBUNIT</scope>
    <scope>SUBCELLULAR LOCATION</scope>
    <source>
        <strain evidence="12">ATCC 29579 / DSM 644 / CCUG 34227 / NCIMB 8303 / VKM B-1760 / Hildenborough</strain>
    </source>
</reference>
<reference evidence="20" key="9">
    <citation type="journal article" date="2008" name="J. Mol. Biol.">
        <title>Quinol oxidation by c-type cytochromes: structural characterization of the menaquinol binding site of NrfHA.</title>
        <authorList>
            <person name="Rodrigues M.L."/>
            <person name="Scott K.A."/>
            <person name="Sansom M.S."/>
            <person name="Pereira I.A."/>
            <person name="Archer M."/>
        </authorList>
    </citation>
    <scope>X-RAY CRYSTALLOGRAPHY (2.80 ANGSTROMS) IN COMPLEX WITH HEME; NRFA AND MENAQUINOL ANALOG INHIBITOR</scope>
    <scope>FUNCTION</scope>
    <scope>COFACTOR</scope>
    <scope>SUBUNIT</scope>
    <scope>SUBCELLULAR LOCATION</scope>
    <source>
        <strain evidence="13">ATCC 29579 / DSM 644 / CCUG 34227 / NCIMB 8303 / VKM B-1760 / Hildenborough</strain>
    </source>
</reference>
<name>NRFH_NITV2</name>
<dbReference type="EMBL" id="AE017285">
    <property type="protein sequence ID" value="AAS95105.1"/>
    <property type="molecule type" value="Genomic_DNA"/>
</dbReference>
<dbReference type="RefSeq" id="WP_010937927.1">
    <property type="nucleotide sequence ID" value="NC_002937.3"/>
</dbReference>
<dbReference type="RefSeq" id="YP_009846.1">
    <property type="nucleotide sequence ID" value="NC_002937.3"/>
</dbReference>
<dbReference type="PDB" id="2J7A">
    <property type="method" value="X-ray"/>
    <property type="resolution" value="2.30 A"/>
    <property type="chains" value="C/F/I/L/O/R=1-159"/>
</dbReference>
<dbReference type="PDB" id="2VR0">
    <property type="method" value="X-ray"/>
    <property type="resolution" value="2.80 A"/>
    <property type="chains" value="C/F=1-159"/>
</dbReference>
<dbReference type="PDBsum" id="2J7A"/>
<dbReference type="PDBsum" id="2VR0"/>
<dbReference type="SMR" id="Q72EF4"/>
<dbReference type="STRING" id="882.DVU_0624"/>
<dbReference type="DrugBank" id="DB07918">
    <property type="generic name" value="2-heptyl-4-hydroxyquinoline N-oxide"/>
</dbReference>
<dbReference type="PaxDb" id="882-DVU_0624"/>
<dbReference type="EnsemblBacteria" id="AAS95105">
    <property type="protein sequence ID" value="AAS95105"/>
    <property type="gene ID" value="DVU_0624"/>
</dbReference>
<dbReference type="KEGG" id="dvu:DVU_0624"/>
<dbReference type="PATRIC" id="fig|882.5.peg.582"/>
<dbReference type="eggNOG" id="COG3005">
    <property type="taxonomic scope" value="Bacteria"/>
</dbReference>
<dbReference type="HOGENOM" id="CLU_096753_0_0_7"/>
<dbReference type="OrthoDB" id="9782159at2"/>
<dbReference type="PhylomeDB" id="Q72EF4"/>
<dbReference type="EvolutionaryTrace" id="Q72EF4"/>
<dbReference type="Proteomes" id="UP000002194">
    <property type="component" value="Chromosome"/>
</dbReference>
<dbReference type="GO" id="GO:0005886">
    <property type="term" value="C:plasma membrane"/>
    <property type="evidence" value="ECO:0007669"/>
    <property type="project" value="UniProtKB-SubCell"/>
</dbReference>
<dbReference type="GO" id="GO:0009055">
    <property type="term" value="F:electron transfer activity"/>
    <property type="evidence" value="ECO:0007669"/>
    <property type="project" value="TreeGrafter"/>
</dbReference>
<dbReference type="GO" id="GO:0020037">
    <property type="term" value="F:heme binding"/>
    <property type="evidence" value="ECO:0007669"/>
    <property type="project" value="InterPro"/>
</dbReference>
<dbReference type="GO" id="GO:0046872">
    <property type="term" value="F:metal ion binding"/>
    <property type="evidence" value="ECO:0007669"/>
    <property type="project" value="UniProtKB-KW"/>
</dbReference>
<dbReference type="GO" id="GO:0009061">
    <property type="term" value="P:anaerobic respiration"/>
    <property type="evidence" value="ECO:0007669"/>
    <property type="project" value="TreeGrafter"/>
</dbReference>
<dbReference type="GO" id="GO:0019333">
    <property type="term" value="P:denitrification pathway"/>
    <property type="evidence" value="ECO:0007669"/>
    <property type="project" value="InterPro"/>
</dbReference>
<dbReference type="Gene3D" id="1.10.3820.10">
    <property type="entry name" value="Di-heme elbow motif domain"/>
    <property type="match status" value="1"/>
</dbReference>
<dbReference type="InterPro" id="IPR051174">
    <property type="entry name" value="Cytochrome_c-type_ET"/>
</dbReference>
<dbReference type="InterPro" id="IPR036280">
    <property type="entry name" value="Multihaem_cyt_sf"/>
</dbReference>
<dbReference type="InterPro" id="IPR024717">
    <property type="entry name" value="NapC/NirT/NrfH"/>
</dbReference>
<dbReference type="InterPro" id="IPR005126">
    <property type="entry name" value="NapC/NirT_cyt_c_N"/>
</dbReference>
<dbReference type="InterPro" id="IPR038266">
    <property type="entry name" value="NapC/NirT_cytc_sf"/>
</dbReference>
<dbReference type="PANTHER" id="PTHR30333">
    <property type="entry name" value="CYTOCHROME C-TYPE PROTEIN"/>
    <property type="match status" value="1"/>
</dbReference>
<dbReference type="PANTHER" id="PTHR30333:SF1">
    <property type="entry name" value="CYTOCHROME C-TYPE PROTEIN NAPC"/>
    <property type="match status" value="1"/>
</dbReference>
<dbReference type="Pfam" id="PF03264">
    <property type="entry name" value="Cytochrom_NNT"/>
    <property type="match status" value="1"/>
</dbReference>
<dbReference type="PIRSF" id="PIRSF000013">
    <property type="entry name" value="4_hem_cytochrm_NapC"/>
    <property type="match status" value="1"/>
</dbReference>
<dbReference type="SUPFAM" id="SSF48695">
    <property type="entry name" value="Multiheme cytochromes"/>
    <property type="match status" value="1"/>
</dbReference>
<dbReference type="PROSITE" id="PS51008">
    <property type="entry name" value="MULTIHEME_CYTC"/>
    <property type="match status" value="1"/>
</dbReference>
<keyword id="KW-0002">3D-structure</keyword>
<keyword id="KW-0997">Cell inner membrane</keyword>
<keyword id="KW-1003">Cell membrane</keyword>
<keyword id="KW-0903">Direct protein sequencing</keyword>
<keyword id="KW-0249">Electron transport</keyword>
<keyword id="KW-0349">Heme</keyword>
<keyword id="KW-0408">Iron</keyword>
<keyword id="KW-0472">Membrane</keyword>
<keyword id="KW-0479">Metal-binding</keyword>
<keyword id="KW-1185">Reference proteome</keyword>
<keyword id="KW-0735">Signal-anchor</keyword>
<keyword id="KW-0346">Stress response</keyword>
<keyword id="KW-0812">Transmembrane</keyword>
<keyword id="KW-1133">Transmembrane helix</keyword>
<keyword id="KW-0813">Transport</keyword>
<protein>
    <recommendedName>
        <fullName evidence="10 11">Cytochrome c nitrite reductase subunit NrfH</fullName>
        <shortName evidence="11">cNiR subunit NrfH</shortName>
    </recommendedName>
    <alternativeName>
        <fullName evidence="12">Cytochrome c quinol dehydrogenase NrfH</fullName>
    </alternativeName>
    <alternativeName>
        <fullName evidence="15">Cytochrome c-type protein NrfH</fullName>
    </alternativeName>
</protein>